<accession>P86359</accession>
<dbReference type="GO" id="GO:0005576">
    <property type="term" value="C:extracellular region"/>
    <property type="evidence" value="ECO:0007669"/>
    <property type="project" value="UniProtKB-SubCell"/>
</dbReference>
<dbReference type="GO" id="GO:0042742">
    <property type="term" value="P:defense response to bacterium"/>
    <property type="evidence" value="ECO:0007669"/>
    <property type="project" value="UniProtKB-KW"/>
</dbReference>
<organism>
    <name type="scientific">Heliothis virescens</name>
    <name type="common">Tobacco budworm moth</name>
    <dbReference type="NCBI Taxonomy" id="7102"/>
    <lineage>
        <taxon>Eukaryota</taxon>
        <taxon>Metazoa</taxon>
        <taxon>Ecdysozoa</taxon>
        <taxon>Arthropoda</taxon>
        <taxon>Hexapoda</taxon>
        <taxon>Insecta</taxon>
        <taxon>Pterygota</taxon>
        <taxon>Neoptera</taxon>
        <taxon>Endopterygota</taxon>
        <taxon>Lepidoptera</taxon>
        <taxon>Glossata</taxon>
        <taxon>Ditrysia</taxon>
        <taxon>Noctuoidea</taxon>
        <taxon>Noctuidae</taxon>
        <taxon>Heliothinae</taxon>
        <taxon>Heliothis</taxon>
    </lineage>
</organism>
<sequence>TPDHREVPSFSSRWEPNFGLTFSK</sequence>
<evidence type="ECO:0000250" key="1">
    <source>
        <dbReference type="UniProtKB" id="Q26431"/>
    </source>
</evidence>
<evidence type="ECO:0000255" key="2"/>
<evidence type="ECO:0000305" key="3"/>
<proteinExistence type="evidence at protein level"/>
<comment type="function">
    <text evidence="1">Hemolymph antibacterial protein.</text>
</comment>
<comment type="subcellular location">
    <subcellularLocation>
        <location evidence="1">Secreted</location>
    </subcellularLocation>
</comment>
<comment type="similarity">
    <text evidence="2">Belongs to the attacin/sarcotoxin-2 family.</text>
</comment>
<comment type="caution">
    <text evidence="3">The order of the peptides shown is unknown.</text>
</comment>
<reference evidence="3" key="1">
    <citation type="submission" date="2009-09" db="UniProtKB">
        <authorList>
            <person name="Shelby K.S."/>
        </authorList>
    </citation>
    <scope>PROTEIN SEQUENCE</scope>
    <source>
        <tissue>Hemolymph</tissue>
    </source>
</reference>
<name>ATT_HELVI</name>
<keyword id="KW-0044">Antibiotic</keyword>
<keyword id="KW-0929">Antimicrobial</keyword>
<keyword id="KW-0903">Direct protein sequencing</keyword>
<keyword id="KW-0964">Secreted</keyword>
<feature type="chain" id="PRO_0000392508" description="Attacin">
    <location>
        <begin position="1" status="less than"/>
        <end position="24" status="greater than"/>
    </location>
</feature>
<feature type="non-consecutive residues" evidence="3">
    <location>
        <begin position="5"/>
        <end position="6"/>
    </location>
</feature>
<feature type="non-consecutive residues" evidence="3">
    <location>
        <begin position="13"/>
        <end position="14"/>
    </location>
</feature>
<feature type="non-terminal residue">
    <location>
        <position position="1"/>
    </location>
</feature>
<feature type="non-terminal residue">
    <location>
        <position position="24"/>
    </location>
</feature>
<protein>
    <recommendedName>
        <fullName evidence="1">Attacin</fullName>
    </recommendedName>
</protein>